<comment type="function">
    <text evidence="1">This is one of the proteins that bind and probably mediate the attachment of the 5S RNA into the large ribosomal subunit, where it forms part of the central protuberance. In the 70S ribosome it contacts protein S13 of the 30S subunit (bridge B1b), connecting the 2 subunits; this bridge is implicated in subunit movement. Contacts the P site tRNA; the 5S rRNA and some of its associated proteins might help stabilize positioning of ribosome-bound tRNAs.</text>
</comment>
<comment type="subunit">
    <text evidence="1">Part of the 50S ribosomal subunit; part of the 5S rRNA/L5/L18/L25 subcomplex. Contacts the 5S rRNA and the P site tRNA. Forms a bridge to the 30S subunit in the 70S ribosome.</text>
</comment>
<comment type="similarity">
    <text evidence="1">Belongs to the universal ribosomal protein uL5 family.</text>
</comment>
<name>RL5_ECO5E</name>
<keyword id="KW-0007">Acetylation</keyword>
<keyword id="KW-0687">Ribonucleoprotein</keyword>
<keyword id="KW-0689">Ribosomal protein</keyword>
<keyword id="KW-0694">RNA-binding</keyword>
<keyword id="KW-0699">rRNA-binding</keyword>
<keyword id="KW-0820">tRNA-binding</keyword>
<organism>
    <name type="scientific">Escherichia coli O157:H7 (strain EC4115 / EHEC)</name>
    <dbReference type="NCBI Taxonomy" id="444450"/>
    <lineage>
        <taxon>Bacteria</taxon>
        <taxon>Pseudomonadati</taxon>
        <taxon>Pseudomonadota</taxon>
        <taxon>Gammaproteobacteria</taxon>
        <taxon>Enterobacterales</taxon>
        <taxon>Enterobacteriaceae</taxon>
        <taxon>Escherichia</taxon>
    </lineage>
</organism>
<accession>B5YTM9</accession>
<dbReference type="EMBL" id="CP001164">
    <property type="protein sequence ID" value="ACI35008.1"/>
    <property type="molecule type" value="Genomic_DNA"/>
</dbReference>
<dbReference type="RefSeq" id="WP_001096200.1">
    <property type="nucleotide sequence ID" value="NC_011353.1"/>
</dbReference>
<dbReference type="SMR" id="B5YTM9"/>
<dbReference type="GeneID" id="93778679"/>
<dbReference type="KEGG" id="ecf:ECH74115_4631"/>
<dbReference type="HOGENOM" id="CLU_061015_2_1_6"/>
<dbReference type="GO" id="GO:1990904">
    <property type="term" value="C:ribonucleoprotein complex"/>
    <property type="evidence" value="ECO:0007669"/>
    <property type="project" value="UniProtKB-KW"/>
</dbReference>
<dbReference type="GO" id="GO:0005840">
    <property type="term" value="C:ribosome"/>
    <property type="evidence" value="ECO:0007669"/>
    <property type="project" value="UniProtKB-KW"/>
</dbReference>
<dbReference type="GO" id="GO:0019843">
    <property type="term" value="F:rRNA binding"/>
    <property type="evidence" value="ECO:0007669"/>
    <property type="project" value="UniProtKB-UniRule"/>
</dbReference>
<dbReference type="GO" id="GO:0003735">
    <property type="term" value="F:structural constituent of ribosome"/>
    <property type="evidence" value="ECO:0007669"/>
    <property type="project" value="InterPro"/>
</dbReference>
<dbReference type="GO" id="GO:0000049">
    <property type="term" value="F:tRNA binding"/>
    <property type="evidence" value="ECO:0007669"/>
    <property type="project" value="UniProtKB-UniRule"/>
</dbReference>
<dbReference type="GO" id="GO:0006412">
    <property type="term" value="P:translation"/>
    <property type="evidence" value="ECO:0007669"/>
    <property type="project" value="UniProtKB-UniRule"/>
</dbReference>
<dbReference type="FunFam" id="3.30.1440.10:FF:000001">
    <property type="entry name" value="50S ribosomal protein L5"/>
    <property type="match status" value="1"/>
</dbReference>
<dbReference type="Gene3D" id="3.30.1440.10">
    <property type="match status" value="1"/>
</dbReference>
<dbReference type="HAMAP" id="MF_01333_B">
    <property type="entry name" value="Ribosomal_uL5_B"/>
    <property type="match status" value="1"/>
</dbReference>
<dbReference type="InterPro" id="IPR002132">
    <property type="entry name" value="Ribosomal_uL5"/>
</dbReference>
<dbReference type="InterPro" id="IPR020930">
    <property type="entry name" value="Ribosomal_uL5_bac-type"/>
</dbReference>
<dbReference type="InterPro" id="IPR031309">
    <property type="entry name" value="Ribosomal_uL5_C"/>
</dbReference>
<dbReference type="InterPro" id="IPR020929">
    <property type="entry name" value="Ribosomal_uL5_CS"/>
</dbReference>
<dbReference type="InterPro" id="IPR022803">
    <property type="entry name" value="Ribosomal_uL5_dom_sf"/>
</dbReference>
<dbReference type="InterPro" id="IPR031310">
    <property type="entry name" value="Ribosomal_uL5_N"/>
</dbReference>
<dbReference type="NCBIfam" id="NF000585">
    <property type="entry name" value="PRK00010.1"/>
    <property type="match status" value="1"/>
</dbReference>
<dbReference type="PANTHER" id="PTHR11994">
    <property type="entry name" value="60S RIBOSOMAL PROTEIN L11-RELATED"/>
    <property type="match status" value="1"/>
</dbReference>
<dbReference type="Pfam" id="PF00281">
    <property type="entry name" value="Ribosomal_L5"/>
    <property type="match status" value="1"/>
</dbReference>
<dbReference type="Pfam" id="PF00673">
    <property type="entry name" value="Ribosomal_L5_C"/>
    <property type="match status" value="1"/>
</dbReference>
<dbReference type="PIRSF" id="PIRSF002161">
    <property type="entry name" value="Ribosomal_L5"/>
    <property type="match status" value="1"/>
</dbReference>
<dbReference type="SUPFAM" id="SSF55282">
    <property type="entry name" value="RL5-like"/>
    <property type="match status" value="1"/>
</dbReference>
<dbReference type="PROSITE" id="PS00358">
    <property type="entry name" value="RIBOSOMAL_L5"/>
    <property type="match status" value="1"/>
</dbReference>
<gene>
    <name evidence="1" type="primary">rplE</name>
    <name type="ordered locus">ECH74115_4631</name>
</gene>
<protein>
    <recommendedName>
        <fullName evidence="1">Large ribosomal subunit protein uL5</fullName>
    </recommendedName>
    <alternativeName>
        <fullName evidence="2">50S ribosomal protein L5</fullName>
    </alternativeName>
</protein>
<sequence>MAKLHDYYKDEVVKKLMTEFNYNSVMQVPRVEKITLNMGVGEAIADKKLLDNAAADLAAISGQKPLITKARKSVAGFKIRQGYPIGCKVTLRGERMWEFFERLITIAVPRIRDFRGLSAKSFDGRGNYSMGVREQIIFPEIDYDKVDRVRGLDITITTTAKSDEEGRALLAAFDFPFRK</sequence>
<reference key="1">
    <citation type="journal article" date="2011" name="Proc. Natl. Acad. Sci. U.S.A.">
        <title>Genomic anatomy of Escherichia coli O157:H7 outbreaks.</title>
        <authorList>
            <person name="Eppinger M."/>
            <person name="Mammel M.K."/>
            <person name="Leclerc J.E."/>
            <person name="Ravel J."/>
            <person name="Cebula T.A."/>
        </authorList>
    </citation>
    <scope>NUCLEOTIDE SEQUENCE [LARGE SCALE GENOMIC DNA]</scope>
    <source>
        <strain>EC4115 / EHEC</strain>
    </source>
</reference>
<evidence type="ECO:0000255" key="1">
    <source>
        <dbReference type="HAMAP-Rule" id="MF_01333"/>
    </source>
</evidence>
<evidence type="ECO:0000305" key="2"/>
<feature type="chain" id="PRO_1000142394" description="Large ribosomal subunit protein uL5">
    <location>
        <begin position="1"/>
        <end position="179"/>
    </location>
</feature>
<feature type="modified residue" description="N6-acetyllysine" evidence="1">
    <location>
        <position position="3"/>
    </location>
</feature>
<proteinExistence type="inferred from homology"/>